<accession>Q9XD84</accession>
<accession>E3PBM3</accession>
<keyword id="KW-0002">3D-structure</keyword>
<keyword id="KW-0130">Cell adhesion</keyword>
<keyword id="KW-0998">Cell outer membrane</keyword>
<keyword id="KW-0903">Direct protein sequencing</keyword>
<keyword id="KW-0325">Glycoprotein</keyword>
<keyword id="KW-0472">Membrane</keyword>
<keyword id="KW-0677">Repeat</keyword>
<keyword id="KW-0732">Signal</keyword>
<keyword id="KW-0812">Transmembrane</keyword>
<keyword id="KW-1134">Transmembrane beta strand</keyword>
<keyword id="KW-0843">Virulence</keyword>
<name>TIBA_ECOH1</name>
<sequence>MNKVYNTVWNESTGTWVVTSELTRKGGLRPRQIKRTVLAGLIAGLLMPSMPALAAAYDNQTIGRGETSKSMHLSAGDTAKNTTINSGGKQYVSSGGSATSTTINIGGVQHVSSGGSATSSTINSGGHQHVSSGGSATNTTVNNGGRQTVFSGGSAMGTIINSGGDQYVISGGSATSASVTSGARQFVSSGGIVKATSVNSGGRQYVRDGGSATDTVLNNTGRQFVSSGGSAAKTTINSGGGMYLYGGSATGTSIYNGGRQYVSSGGSATNTTVYSGGRQHVYIDGNVTETTITSGGMLQVEAGGSASKVIQNSGGAVITNTSAAVSGTNDNGSFSIAGGSAVNMLLENGGYLTVFDGHQASDTMVGSDGTLDVRSGGVLYGTTTLTDKGALVGDVVTNEGNLYYLNNSTATFTGTLTGTGTLTQEGGNTRFSGLLSQDGGIFLQSGGAMTMDALQAKANVTTQSGTTLTLDNGTILTGNVAGDSTGAGDMAVKGASVWHLDGDSTVGALTLDNGTVDFRPSTTTRMTPAFQAVSLALGSLSGSGTFQMNTDIASHTGDMLNVAGNASGNFVLDIKNTGLEPVSAGAPLQVVQTGGGDAAFTLKGGKVDAGTWEYGLSKENTNWYLKADTPPPVTPPTNPDADNPDAGNPDAGNPDAGNPDAGNPDAGKPGTGKPDAGTSSSPVRRTTKSVDAVLGMATAPAYVFNSELDNLRFRHGDVMQNTRAPGGVWGRYTGSDNRISGGASSGYTLTQNGFETGADMVFDLSDSSLAVGTFFSYSDNSIKHARGGKSNVDSSGGGLYATWFDNDGYYVDGVLKYNRFNNELRTWMSDGTAVKGDYSQNGFGGSLEAGRTFSLNENAWAQPYVRTTAFRADKKEIRLNNGMKASIGATKSLQAEAGLKLGMTLDVAGKEVKPYLSAAVSHEFSDNNKVRINDTYDFRNDISGTTGKYGLGVNAQLTPNAGVWAEARYENGKQTESPITGGVGFRINF</sequence>
<protein>
    <recommendedName>
        <fullName evidence="11">Autotransporter adhesin/invasin TibA</fullName>
    </recommendedName>
</protein>
<gene>
    <name evidence="10" type="primary">tibA</name>
    <name type="ordered locus">ETEC_2141</name>
</gene>
<evidence type="ECO:0000250" key="1">
    <source>
        <dbReference type="UniProtKB" id="Q03155"/>
    </source>
</evidence>
<evidence type="ECO:0000255" key="2">
    <source>
        <dbReference type="PROSITE-ProRule" id="PRU00556"/>
    </source>
</evidence>
<evidence type="ECO:0000256" key="3">
    <source>
        <dbReference type="SAM" id="MobiDB-lite"/>
    </source>
</evidence>
<evidence type="ECO:0000269" key="4">
    <source>
    </source>
</evidence>
<evidence type="ECO:0000269" key="5">
    <source>
    </source>
</evidence>
<evidence type="ECO:0000269" key="6">
    <source>
    </source>
</evidence>
<evidence type="ECO:0000269" key="7">
    <source>
    </source>
</evidence>
<evidence type="ECO:0000269" key="8">
    <source>
    </source>
</evidence>
<evidence type="ECO:0000269" key="9">
    <source>
    </source>
</evidence>
<evidence type="ECO:0000303" key="10">
    <source>
    </source>
</evidence>
<evidence type="ECO:0000305" key="11"/>
<evidence type="ECO:0000305" key="12">
    <source>
    </source>
</evidence>
<evidence type="ECO:0000305" key="13">
    <source>
    </source>
</evidence>
<evidence type="ECO:0007744" key="14">
    <source>
        <dbReference type="PDB" id="4Q1Q"/>
    </source>
</evidence>
<evidence type="ECO:0007829" key="15">
    <source>
        <dbReference type="PDB" id="4Q1Q"/>
    </source>
</evidence>
<reference key="1">
    <citation type="journal article" date="1999" name="Infect. Immun.">
        <title>Identification of a glycoprotein produced by enterotoxigenic Escherichia coli.</title>
        <authorList>
            <person name="Lindenthal C."/>
            <person name="Elsinghorst E.A."/>
        </authorList>
    </citation>
    <scope>NUCLEOTIDE SEQUENCE [GENOMIC DNA]</scope>
    <scope>PROTEIN SEQUENCE OF 55-69</scope>
    <scope>SUBCELLULAR LOCATION</scope>
    <scope>GLYCOSYLATION</scope>
    <scope>REPEATS</scope>
    <source>
        <strain>H10407 / ETEC</strain>
    </source>
</reference>
<reference key="2">
    <citation type="journal article" date="2010" name="J. Bacteriol.">
        <title>A commensal gone bad: complete genome sequence of the prototypical enterotoxigenic Escherichia coli strain H10407.</title>
        <authorList>
            <person name="Crossman L.C."/>
            <person name="Chaudhuri R.R."/>
            <person name="Beatson S.A."/>
            <person name="Wells T.J."/>
            <person name="Desvaux M."/>
            <person name="Cunningham A.F."/>
            <person name="Petty N.K."/>
            <person name="Mahon V."/>
            <person name="Brinkley C."/>
            <person name="Hobman J.L."/>
            <person name="Savarino S.J."/>
            <person name="Turner S.M."/>
            <person name="Pallen M.J."/>
            <person name="Penn C.W."/>
            <person name="Parkhill J."/>
            <person name="Turner A.K."/>
            <person name="Johnson T.J."/>
            <person name="Thomson N.R."/>
            <person name="Smith S.G."/>
            <person name="Henderson I.R."/>
        </authorList>
    </citation>
    <scope>NUCLEOTIDE SEQUENCE [LARGE SCALE GENOMIC DNA]</scope>
    <source>
        <strain>H10407 / ETEC</strain>
    </source>
</reference>
<reference key="3">
    <citation type="journal article" date="1994" name="Infect. Immun.">
        <title>Epithelial cell invasion and adherence directed by the enterotoxigenic Escherichia coli tib locus is associated with a 104-kilodalton outer membrane protein.</title>
        <authorList>
            <person name="Elsinghorst E.A."/>
            <person name="Weitz J.A."/>
        </authorList>
    </citation>
    <scope>FUNCTION</scope>
    <scope>SUBCELLULAR LOCATION</scope>
    <source>
        <strain>H10407 / ETEC</strain>
    </source>
</reference>
<reference key="4">
    <citation type="journal article" date="2001" name="Infect. Immun.">
        <title>Enterotoxigenic Escherichia coli TibA glycoprotein adheres to human intestine epithelial cells.</title>
        <authorList>
            <person name="Lindenthal C."/>
            <person name="Elsinghorst E.A."/>
        </authorList>
    </citation>
    <scope>FUNCTION</scope>
    <scope>PROTEIN SEQUENCE OF 55-64</scope>
    <source>
        <strain>H10407 / ETEC</strain>
    </source>
</reference>
<reference key="5">
    <citation type="journal article" date="2005" name="Infect. Immun.">
        <title>The TibA adhesin/invasin from enterotoxigenic Escherichia coli is self recognizing and induces bacterial aggregation and biofilm formation.</title>
        <authorList>
            <person name="Sherlock O."/>
            <person name="Vejborg R.M."/>
            <person name="Klemm P."/>
        </authorList>
    </citation>
    <scope>FUNCTION</scope>
    <scope>GLYCOSYLATION</scope>
    <source>
        <strain>H10407 / ETEC</strain>
    </source>
</reference>
<reference key="6">
    <citation type="journal article" date="2014" name="Elife">
        <title>A structural mechanism for bacterial autotransporter glycosylation by a dodecameric heptosyltransferase family.</title>
        <authorList>
            <person name="Yao Q."/>
            <person name="Lu Q."/>
            <person name="Wan X."/>
            <person name="Song F."/>
            <person name="Xu Y."/>
            <person name="Hu M."/>
            <person name="Zamyatina A."/>
            <person name="Liu X."/>
            <person name="Huang N."/>
            <person name="Zhu P."/>
            <person name="Shao F."/>
        </authorList>
    </citation>
    <scope>SUBUNIT</scope>
    <scope>GLYCOSYLATION AT SER-313 AND SER-322</scope>
</reference>
<reference evidence="14" key="7">
    <citation type="journal article" date="2014" name="Cell Host Microbe">
        <title>An iron-containing dodecameric heptosyltransferase family modifies bacterial autotransporters in pathogenesis.</title>
        <authorList>
            <person name="Lu Q."/>
            <person name="Yao Q."/>
            <person name="Xu Y."/>
            <person name="Li L."/>
            <person name="Li S."/>
            <person name="Liu Y."/>
            <person name="Gao W."/>
            <person name="Niu M."/>
            <person name="Sharon M."/>
            <person name="Ben-Nissan G."/>
            <person name="Zamyatina A."/>
            <person name="Liu X."/>
            <person name="Chen S."/>
            <person name="Shao F."/>
        </authorList>
    </citation>
    <scope>X-RAY CRYSTALLOGRAPHY (2.11 ANGSTROMS) OF 55-350</scope>
    <scope>GLYCOSYLATION AT SER-74; SER-86; SER-93; SER-94; SER-97; SER-100; SER-112; SER-113; SER-116; SER-119; SER-124; SER-131; SER-132; SER-135; SER-151; SER-154; SER-162; SER-170; SER-176; SER-181; SER-188; SER-189; SER-200; SER-226; SER-227; SER-230; SER-238; SER-248; SER-263; SER-264; SER-275; SER-294; SER-305; SER-313 AND SER-322</scope>
</reference>
<feature type="signal peptide" evidence="4 5">
    <location>
        <begin position="1"/>
        <end position="54"/>
    </location>
</feature>
<feature type="chain" id="PRO_0000387584" description="Autotransporter adhesin/invasin TibA">
    <location>
        <begin position="55"/>
        <end position="989"/>
    </location>
</feature>
<feature type="repeat" description="1-1" evidence="12">
    <location>
        <begin position="82"/>
        <end position="100"/>
    </location>
</feature>
<feature type="repeat" description="1-2" evidence="12">
    <location>
        <begin position="101"/>
        <end position="119"/>
    </location>
</feature>
<feature type="repeat" description="1-3" evidence="12">
    <location>
        <begin position="120"/>
        <end position="138"/>
    </location>
</feature>
<feature type="repeat" description="1-4" evidence="12">
    <location>
        <begin position="139"/>
        <end position="157"/>
    </location>
</feature>
<feature type="repeat" description="1-5" evidence="12">
    <location>
        <begin position="158"/>
        <end position="176"/>
    </location>
</feature>
<feature type="repeat" description="1-6" evidence="12">
    <location>
        <begin position="177"/>
        <end position="195"/>
    </location>
</feature>
<feature type="repeat" description="1-7" evidence="12">
    <location>
        <begin position="196"/>
        <end position="214"/>
    </location>
</feature>
<feature type="repeat" description="1-8" evidence="12">
    <location>
        <begin position="215"/>
        <end position="233"/>
    </location>
</feature>
<feature type="repeat" description="1-9" evidence="12">
    <location>
        <begin position="234"/>
        <end position="251"/>
    </location>
</feature>
<feature type="repeat" description="1-10" evidence="12">
    <location>
        <begin position="252"/>
        <end position="270"/>
    </location>
</feature>
<feature type="repeat" description="1-11" evidence="12">
    <location>
        <begin position="271"/>
        <end position="289"/>
    </location>
</feature>
<feature type="repeat" description="1-12" evidence="12">
    <location>
        <begin position="290"/>
        <end position="308"/>
    </location>
</feature>
<feature type="repeat" description="2-1" evidence="12">
    <location>
        <begin position="639"/>
        <end position="643"/>
    </location>
</feature>
<feature type="repeat" description="2-2" evidence="12">
    <location>
        <begin position="644"/>
        <end position="648"/>
    </location>
</feature>
<feature type="repeat" description="2-3" evidence="12">
    <location>
        <begin position="649"/>
        <end position="653"/>
    </location>
</feature>
<feature type="repeat" description="2-4" evidence="12">
    <location>
        <begin position="654"/>
        <end position="658"/>
    </location>
</feature>
<feature type="repeat" description="2-5" evidence="12">
    <location>
        <begin position="659"/>
        <end position="663"/>
    </location>
</feature>
<feature type="repeat" description="2-6" evidence="12">
    <location>
        <begin position="664"/>
        <end position="668"/>
    </location>
</feature>
<feature type="repeat" description="2-7" evidence="12">
    <location>
        <begin position="669"/>
        <end position="673"/>
    </location>
</feature>
<feature type="repeat" description="2-8" evidence="12">
    <location>
        <begin position="674"/>
        <end position="678"/>
    </location>
</feature>
<feature type="domain" description="Autotransporter" evidence="2">
    <location>
        <begin position="721"/>
        <end position="989"/>
    </location>
</feature>
<feature type="region of interest" description="12 X 19 AA approximate repeats" evidence="12">
    <location>
        <begin position="82"/>
        <end position="308"/>
    </location>
</feature>
<feature type="region of interest" description="Disordered" evidence="3">
    <location>
        <begin position="110"/>
        <end position="146"/>
    </location>
</feature>
<feature type="region of interest" description="Disordered" evidence="3">
    <location>
        <begin position="623"/>
        <end position="686"/>
    </location>
</feature>
<feature type="region of interest" description="8 X 5 AA repeats of P-[DG]-[AGT]-[DGA]-[NKT]" evidence="12">
    <location>
        <begin position="639"/>
        <end position="678"/>
    </location>
</feature>
<feature type="compositionally biased region" description="Polar residues" evidence="3">
    <location>
        <begin position="110"/>
        <end position="123"/>
    </location>
</feature>
<feature type="compositionally biased region" description="Low complexity" evidence="3">
    <location>
        <begin position="124"/>
        <end position="135"/>
    </location>
</feature>
<feature type="compositionally biased region" description="Polar residues" evidence="3">
    <location>
        <begin position="136"/>
        <end position="146"/>
    </location>
</feature>
<feature type="compositionally biased region" description="Pro residues" evidence="3">
    <location>
        <begin position="629"/>
        <end position="638"/>
    </location>
</feature>
<feature type="compositionally biased region" description="Low complexity" evidence="3">
    <location>
        <begin position="639"/>
        <end position="667"/>
    </location>
</feature>
<feature type="glycosylation site" description="O-alpha-linked (D-glycero-D-manno-heptose) serine" evidence="7 14">
    <location>
        <position position="74"/>
    </location>
</feature>
<feature type="glycosylation site" description="O-alpha-linked (D-glycero-D-manno-heptose) serine" evidence="7 14">
    <location>
        <position position="86"/>
    </location>
</feature>
<feature type="glycosylation site" description="O-alpha-linked (D-glycero-D-manno-heptose) serine" evidence="7 14">
    <location>
        <position position="93"/>
    </location>
</feature>
<feature type="glycosylation site" description="O-alpha-linked (D-glycero-D-manno-heptose) serine" evidence="7 14">
    <location>
        <position position="94"/>
    </location>
</feature>
<feature type="glycosylation site" description="O-alpha-linked (D-glycero-D-manno-heptose) serine" evidence="7 14">
    <location>
        <position position="97"/>
    </location>
</feature>
<feature type="glycosylation site" description="O-alpha-linked (D-glycero-D-manno-heptose) serine" evidence="7 14">
    <location>
        <position position="100"/>
    </location>
</feature>
<feature type="glycosylation site" description="O-alpha-linked (D-glycero-D-manno-heptose) serine" evidence="7 14">
    <location>
        <position position="112"/>
    </location>
</feature>
<feature type="glycosylation site" description="O-alpha-linked (D-glycero-D-manno-heptose) serine" evidence="7 14">
    <location>
        <position position="113"/>
    </location>
</feature>
<feature type="glycosylation site" description="O-alpha-linked (D-glycero-D-manno-heptose) serine" evidence="7 14">
    <location>
        <position position="116"/>
    </location>
</feature>
<feature type="glycosylation site" description="O-alpha-linked (D-glycero-D-manno-heptose) serine" evidence="7 14">
    <location>
        <position position="119"/>
    </location>
</feature>
<feature type="glycosylation site" description="O-alpha-linked (D-glycero-D-manno-heptose) serine" evidence="7 14">
    <location>
        <position position="124"/>
    </location>
</feature>
<feature type="glycosylation site" description="O-alpha-linked (D-glycero-D-manno-heptose) serine" evidence="7 14">
    <location>
        <position position="131"/>
    </location>
</feature>
<feature type="glycosylation site" description="O-alpha-linked (D-glycero-D-manno-heptose) serine" evidence="7 14">
    <location>
        <position position="132"/>
    </location>
</feature>
<feature type="glycosylation site" description="O-alpha-linked (D-glycero-D-manno-heptose) serine" evidence="7 14">
    <location>
        <position position="135"/>
    </location>
</feature>
<feature type="glycosylation site" description="O-alpha-linked (D-glycero-D-manno-heptose) serine" evidence="7 14">
    <location>
        <position position="151"/>
    </location>
</feature>
<feature type="glycosylation site" description="O-alpha-linked (D-glycero-D-manno-heptose) serine" evidence="7 14">
    <location>
        <position position="154"/>
    </location>
</feature>
<feature type="glycosylation site" description="O-alpha-linked (D-glycero-D-manno-heptose) serine" evidence="7 14">
    <location>
        <position position="162"/>
    </location>
</feature>
<feature type="glycosylation site" description="O-alpha-linked (D-glycero-D-manno-heptose) serine" evidence="7 14">
    <location>
        <position position="170"/>
    </location>
</feature>
<feature type="glycosylation site" description="O-alpha-linked (D-glycero-D-manno-heptose) serine" evidence="7 14">
    <location>
        <position position="176"/>
    </location>
</feature>
<feature type="glycosylation site" description="O-alpha-linked (D-glycero-D-manno-heptose) serine" evidence="7 14">
    <location>
        <position position="181"/>
    </location>
</feature>
<feature type="glycosylation site" description="O-alpha-linked (D-glycero-D-manno-heptose) serine" evidence="7 14">
    <location>
        <position position="188"/>
    </location>
</feature>
<feature type="glycosylation site" description="O-alpha-linked (D-glycero-D-manno-heptose) serine" evidence="7 14">
    <location>
        <position position="189"/>
    </location>
</feature>
<feature type="glycosylation site" description="O-alpha-linked (D-glycero-D-manno-heptose) serine" evidence="7 14">
    <location>
        <position position="200"/>
    </location>
</feature>
<feature type="glycosylation site" description="O-alpha-linked (D-glycero-D-manno-heptose) serine" evidence="7 14">
    <location>
        <position position="226"/>
    </location>
</feature>
<feature type="glycosylation site" description="O-alpha-linked (D-glycero-D-manno-heptose) serine" evidence="7 14">
    <location>
        <position position="227"/>
    </location>
</feature>
<feature type="glycosylation site" description="O-alpha-linked (D-glycero-D-manno-heptose) serine" evidence="7 14">
    <location>
        <position position="230"/>
    </location>
</feature>
<feature type="glycosylation site" description="O-alpha-linked (D-glycero-D-manno-heptose) serine" evidence="7 14">
    <location>
        <position position="238"/>
    </location>
</feature>
<feature type="glycosylation site" description="O-alpha-linked (D-glycero-D-manno-heptose) serine" evidence="7 14">
    <location>
        <position position="248"/>
    </location>
</feature>
<feature type="glycosylation site" description="O-alpha-linked (D-glycero-D-manno-heptose) serine" evidence="7 14">
    <location>
        <position position="263"/>
    </location>
</feature>
<feature type="glycosylation site" description="O-alpha-linked (D-glycero-D-manno-heptose) serine" evidence="7 14">
    <location>
        <position position="264"/>
    </location>
</feature>
<feature type="glycosylation site" description="O-alpha-linked (D-glycero-D-manno-heptose) serine" evidence="7 14">
    <location>
        <position position="275"/>
    </location>
</feature>
<feature type="glycosylation site" description="O-alpha-linked (D-glycero-D-manno-heptose) serine" evidence="7 14">
    <location>
        <position position="294"/>
    </location>
</feature>
<feature type="glycosylation site" description="O-alpha-linked (D-glycero-D-manno-heptose) serine" evidence="7 14">
    <location>
        <position position="305"/>
    </location>
</feature>
<feature type="glycosylation site" description="O-alpha-linked (D-glycero-D-manno-heptose) serine" evidence="7 13 14">
    <location>
        <position position="313"/>
    </location>
</feature>
<feature type="glycosylation site" description="O-alpha-linked (D-glycero-D-manno-heptose) serine" evidence="7 13 14">
    <location>
        <position position="322"/>
    </location>
</feature>
<feature type="strand" evidence="15">
    <location>
        <begin position="56"/>
        <end position="59"/>
    </location>
</feature>
<feature type="strand" evidence="15">
    <location>
        <begin position="61"/>
        <end position="63"/>
    </location>
</feature>
<feature type="strand" evidence="15">
    <location>
        <begin position="69"/>
        <end position="73"/>
    </location>
</feature>
<feature type="strand" evidence="15">
    <location>
        <begin position="78"/>
        <end position="81"/>
    </location>
</feature>
<feature type="strand" evidence="15">
    <location>
        <begin position="89"/>
        <end position="92"/>
    </location>
</feature>
<feature type="strand" evidence="15">
    <location>
        <begin position="97"/>
        <end position="100"/>
    </location>
</feature>
<feature type="strand" evidence="15">
    <location>
        <begin position="108"/>
        <end position="111"/>
    </location>
</feature>
<feature type="strand" evidence="15">
    <location>
        <begin position="116"/>
        <end position="119"/>
    </location>
</feature>
<feature type="strand" evidence="15">
    <location>
        <begin position="127"/>
        <end position="130"/>
    </location>
</feature>
<feature type="strand" evidence="15">
    <location>
        <begin position="135"/>
        <end position="138"/>
    </location>
</feature>
<feature type="strand" evidence="15">
    <location>
        <begin position="146"/>
        <end position="149"/>
    </location>
</feature>
<feature type="strand" evidence="15">
    <location>
        <begin position="154"/>
        <end position="157"/>
    </location>
</feature>
<feature type="strand" evidence="15">
    <location>
        <begin position="165"/>
        <end position="169"/>
    </location>
</feature>
<feature type="strand" evidence="15">
    <location>
        <begin position="173"/>
        <end position="176"/>
    </location>
</feature>
<feature type="strand" evidence="15">
    <location>
        <begin position="184"/>
        <end position="188"/>
    </location>
</feature>
<feature type="strand" evidence="15">
    <location>
        <begin position="192"/>
        <end position="195"/>
    </location>
</feature>
<feature type="strand" evidence="15">
    <location>
        <begin position="203"/>
        <end position="206"/>
    </location>
</feature>
<feature type="strand" evidence="15">
    <location>
        <begin position="211"/>
        <end position="214"/>
    </location>
</feature>
<feature type="strand" evidence="15">
    <location>
        <begin position="222"/>
        <end position="226"/>
    </location>
</feature>
<feature type="strand" evidence="15">
    <location>
        <begin position="230"/>
        <end position="233"/>
    </location>
</feature>
<feature type="strand" evidence="15">
    <location>
        <begin position="241"/>
        <end position="246"/>
    </location>
</feature>
<feature type="strand" evidence="15">
    <location>
        <begin position="248"/>
        <end position="254"/>
    </location>
</feature>
<feature type="strand" evidence="15">
    <location>
        <begin position="259"/>
        <end position="262"/>
    </location>
</feature>
<feature type="strand" evidence="15">
    <location>
        <begin position="267"/>
        <end position="273"/>
    </location>
</feature>
<feature type="strand" evidence="15">
    <location>
        <begin position="278"/>
        <end position="281"/>
    </location>
</feature>
<feature type="strand" evidence="15">
    <location>
        <begin position="286"/>
        <end position="292"/>
    </location>
</feature>
<feature type="strand" evidence="15">
    <location>
        <begin position="297"/>
        <end position="300"/>
    </location>
</feature>
<feature type="strand" evidence="15">
    <location>
        <begin position="305"/>
        <end position="311"/>
    </location>
</feature>
<feature type="strand" evidence="15">
    <location>
        <begin position="316"/>
        <end position="318"/>
    </location>
</feature>
<dbReference type="EMBL" id="AF109215">
    <property type="protein sequence ID" value="AAD41751.1"/>
    <property type="molecule type" value="Genomic_DNA"/>
</dbReference>
<dbReference type="EMBL" id="FN649414">
    <property type="protein sequence ID" value="CBJ01643.1"/>
    <property type="molecule type" value="Genomic_DNA"/>
</dbReference>
<dbReference type="RefSeq" id="WP_001045641.1">
    <property type="nucleotide sequence ID" value="NC_017633.1"/>
</dbReference>
<dbReference type="PDB" id="4Q1Q">
    <property type="method" value="X-ray"/>
    <property type="resolution" value="2.11 A"/>
    <property type="chains" value="A/B=55-350"/>
</dbReference>
<dbReference type="PDBsum" id="4Q1Q"/>
<dbReference type="SMR" id="Q9XD84"/>
<dbReference type="TCDB" id="1.B.12.8.3">
    <property type="family name" value="the autotransporter-1 (at-1) family"/>
</dbReference>
<dbReference type="iPTMnet" id="Q9XD84"/>
<dbReference type="KEGG" id="elh:ETEC_2141"/>
<dbReference type="HOGENOM" id="CLU_002318_0_0_6"/>
<dbReference type="GO" id="GO:0009279">
    <property type="term" value="C:cell outer membrane"/>
    <property type="evidence" value="ECO:0000314"/>
    <property type="project" value="CACAO"/>
</dbReference>
<dbReference type="GO" id="GO:0007155">
    <property type="term" value="P:cell adhesion"/>
    <property type="evidence" value="ECO:0007669"/>
    <property type="project" value="UniProtKB-KW"/>
</dbReference>
<dbReference type="CDD" id="cd01343">
    <property type="entry name" value="PL1_Passenger_AT"/>
    <property type="match status" value="1"/>
</dbReference>
<dbReference type="Gene3D" id="2.160.20.20">
    <property type="match status" value="1"/>
</dbReference>
<dbReference type="Gene3D" id="2.40.128.130">
    <property type="entry name" value="Autotransporter beta-domain"/>
    <property type="match status" value="1"/>
</dbReference>
<dbReference type="InterPro" id="IPR030930">
    <property type="entry name" value="AIDA"/>
</dbReference>
<dbReference type="InterPro" id="IPR005546">
    <property type="entry name" value="Autotransporte_beta"/>
</dbReference>
<dbReference type="InterPro" id="IPR036709">
    <property type="entry name" value="Autotransporte_beta_dom_sf"/>
</dbReference>
<dbReference type="InterPro" id="IPR051551">
    <property type="entry name" value="Autotransporter_adhesion"/>
</dbReference>
<dbReference type="InterPro" id="IPR012332">
    <property type="entry name" value="Autotransporter_pectin_lyase_C"/>
</dbReference>
<dbReference type="InterPro" id="IPR024973">
    <property type="entry name" value="ESPR"/>
</dbReference>
<dbReference type="InterPro" id="IPR006315">
    <property type="entry name" value="OM_autotransptr_brl_dom"/>
</dbReference>
<dbReference type="InterPro" id="IPR011050">
    <property type="entry name" value="Pectin_lyase_fold/virulence"/>
</dbReference>
<dbReference type="InterPro" id="IPR004899">
    <property type="entry name" value="Pertactin_central"/>
</dbReference>
<dbReference type="InterPro" id="IPR003991">
    <property type="entry name" value="Pertactin_virulence_factor"/>
</dbReference>
<dbReference type="NCBIfam" id="TIGR01414">
    <property type="entry name" value="autotrans_barl"/>
    <property type="match status" value="1"/>
</dbReference>
<dbReference type="NCBIfam" id="TIGR04415">
    <property type="entry name" value="O_hepto_targRPT"/>
    <property type="match status" value="7"/>
</dbReference>
<dbReference type="PANTHER" id="PTHR35037:SF7">
    <property type="entry name" value="AUTOTRANSPORTER"/>
    <property type="match status" value="1"/>
</dbReference>
<dbReference type="PANTHER" id="PTHR35037">
    <property type="entry name" value="C-TERMINAL REGION OF AIDA-LIKE PROTEIN"/>
    <property type="match status" value="1"/>
</dbReference>
<dbReference type="Pfam" id="PF16168">
    <property type="entry name" value="AIDA"/>
    <property type="match status" value="3"/>
</dbReference>
<dbReference type="Pfam" id="PF03797">
    <property type="entry name" value="Autotransporter"/>
    <property type="match status" value="1"/>
</dbReference>
<dbReference type="Pfam" id="PF13018">
    <property type="entry name" value="ESPR"/>
    <property type="match status" value="1"/>
</dbReference>
<dbReference type="Pfam" id="PF03212">
    <property type="entry name" value="Pertactin"/>
    <property type="match status" value="1"/>
</dbReference>
<dbReference type="PRINTS" id="PR01484">
    <property type="entry name" value="PRTACTNFAMLY"/>
</dbReference>
<dbReference type="SMART" id="SM00869">
    <property type="entry name" value="Autotransporter"/>
    <property type="match status" value="1"/>
</dbReference>
<dbReference type="SUPFAM" id="SSF103515">
    <property type="entry name" value="Autotransporter"/>
    <property type="match status" value="1"/>
</dbReference>
<dbReference type="SUPFAM" id="SSF51126">
    <property type="entry name" value="Pectin lyase-like"/>
    <property type="match status" value="2"/>
</dbReference>
<dbReference type="PROSITE" id="PS51208">
    <property type="entry name" value="AUTOTRANSPORTER"/>
    <property type="match status" value="1"/>
</dbReference>
<proteinExistence type="evidence at protein level"/>
<organism>
    <name type="scientific">Escherichia coli O78:H11 (strain H10407 / ETEC)</name>
    <dbReference type="NCBI Taxonomy" id="316401"/>
    <lineage>
        <taxon>Bacteria</taxon>
        <taxon>Pseudomonadati</taxon>
        <taxon>Pseudomonadota</taxon>
        <taxon>Gammaproteobacteria</taxon>
        <taxon>Enterobacterales</taxon>
        <taxon>Enterobacteriaceae</taxon>
        <taxon>Escherichia</taxon>
    </lineage>
</organism>
<comment type="function">
    <text evidence="5 6 9">Mediates both adhesion to and invasion of human intestine epithelial cells (PubMed:11119488, PubMed:8039917). Also mediates bacterial cell aggregation via intercellular TibA-TibA interaction (PubMed:15784535). Enhances biofilm formation (PubMed:15784535).</text>
</comment>
<comment type="subunit">
    <text evidence="8">Homohexamer.</text>
</comment>
<comment type="subcellular location">
    <subcellularLocation>
        <location evidence="4 9">Cell outer membrane</location>
        <topology evidence="11">Multi-pass membrane protein</topology>
    </subcellularLocation>
</comment>
<comment type="domain">
    <text evidence="1 12">The signal peptide, cleaved at the inner membrane, guides the autotransporter protein to the periplasmic space (By similarity). Then, insertion of the C-terminal translocator domain (or beta-domain) in the outer membrane forms a hydrophilic pore for the translocation of the passenger domain to the bacterial cell surface (By similarity). Unlike autotransporter AIDA-I, appears that there is no cleavage between the N-terminus and the C-terminus translocator domain (Probable).</text>
</comment>
<comment type="PTM">
    <text evidence="4 6 7 8">Glycosylated by TibC (PubMed:10417177, PubMed:15784535, PubMed:25211077, PubMed:25310236). Glycosylation is required for adhesion to and invasion of host cells (PubMed:15784535). Glycosylation is dispensable for bacterial autoaggregation and biofilm formation (PubMed:15784535).</text>
</comment>
<comment type="miscellaneous">
    <text evidence="6">TibA-mediated aggregation is blocked upon capsule expression and fimbriation and is sensitive to pH extremes.</text>
</comment>